<name>PRIA_BACSU</name>
<proteinExistence type="evidence at protein level"/>
<evidence type="ECO:0000255" key="1">
    <source>
        <dbReference type="HAMAP-Rule" id="MF_00983"/>
    </source>
</evidence>
<evidence type="ECO:0000269" key="2">
    <source>
    </source>
</evidence>
<evidence type="ECO:0000269" key="3">
    <source>
    </source>
</evidence>
<evidence type="ECO:0000269" key="4">
    <source>
    </source>
</evidence>
<evidence type="ECO:0000269" key="5">
    <source>
    </source>
</evidence>
<evidence type="ECO:0000269" key="6">
    <source>
    </source>
</evidence>
<evidence type="ECO:0000269" key="7">
    <source>
    </source>
</evidence>
<evidence type="ECO:0000269" key="8">
    <source>
    </source>
</evidence>
<evidence type="ECO:0000269" key="9">
    <source>
    </source>
</evidence>
<evidence type="ECO:0000303" key="10">
    <source>
    </source>
</evidence>
<evidence type="ECO:0000303" key="11">
    <source>
    </source>
</evidence>
<evidence type="ECO:0000303" key="12">
    <source>
    </source>
</evidence>
<evidence type="ECO:0000305" key="13"/>
<evidence type="ECO:0000305" key="14">
    <source>
    </source>
</evidence>
<evidence type="ECO:0000305" key="15">
    <source>
    </source>
</evidence>
<evidence type="ECO:0000305" key="16">
    <source>
    </source>
</evidence>
<evidence type="ECO:0000305" key="17">
    <source>
    </source>
</evidence>
<evidence type="ECO:0000305" key="18">
    <source>
    </source>
</evidence>
<evidence type="ECO:0000305" key="19">
    <source>
    </source>
</evidence>
<dbReference type="EC" id="5.6.2.4" evidence="1 14 16 17"/>
<dbReference type="EMBL" id="Y13937">
    <property type="protein sequence ID" value="CAA74261.1"/>
    <property type="molecule type" value="Genomic_DNA"/>
</dbReference>
<dbReference type="EMBL" id="AL009126">
    <property type="protein sequence ID" value="CAB13444.1"/>
    <property type="molecule type" value="Genomic_DNA"/>
</dbReference>
<dbReference type="EMBL" id="Y10304">
    <property type="protein sequence ID" value="CAA71348.1"/>
    <property type="molecule type" value="Genomic_DNA"/>
</dbReference>
<dbReference type="PIR" id="A69682">
    <property type="entry name" value="A69682"/>
</dbReference>
<dbReference type="RefSeq" id="NP_389453.1">
    <property type="nucleotide sequence ID" value="NC_000964.3"/>
</dbReference>
<dbReference type="RefSeq" id="WP_003232079.1">
    <property type="nucleotide sequence ID" value="NZ_OZ025638.1"/>
</dbReference>
<dbReference type="SMR" id="P94461"/>
<dbReference type="FunCoup" id="P94461">
    <property type="interactions" value="592"/>
</dbReference>
<dbReference type="IntAct" id="P94461">
    <property type="interactions" value="1"/>
</dbReference>
<dbReference type="STRING" id="224308.BSU15710"/>
<dbReference type="PaxDb" id="224308-BSU15710"/>
<dbReference type="EnsemblBacteria" id="CAB13444">
    <property type="protein sequence ID" value="CAB13444"/>
    <property type="gene ID" value="BSU_15710"/>
</dbReference>
<dbReference type="GeneID" id="938122"/>
<dbReference type="KEGG" id="bsu:BSU15710"/>
<dbReference type="PATRIC" id="fig|224308.179.peg.1711"/>
<dbReference type="eggNOG" id="COG1198">
    <property type="taxonomic scope" value="Bacteria"/>
</dbReference>
<dbReference type="InParanoid" id="P94461"/>
<dbReference type="OrthoDB" id="9759544at2"/>
<dbReference type="PhylomeDB" id="P94461"/>
<dbReference type="BioCyc" id="BSUB:BSU15710-MONOMER"/>
<dbReference type="Proteomes" id="UP000001570">
    <property type="component" value="Chromosome"/>
</dbReference>
<dbReference type="GO" id="GO:0005737">
    <property type="term" value="C:cytoplasm"/>
    <property type="evidence" value="ECO:0007669"/>
    <property type="project" value="UniProtKB-KW"/>
</dbReference>
<dbReference type="GO" id="GO:0009295">
    <property type="term" value="C:nucleoid"/>
    <property type="evidence" value="ECO:0007669"/>
    <property type="project" value="UniProtKB-SubCell"/>
</dbReference>
<dbReference type="GO" id="GO:1990077">
    <property type="term" value="C:primosome complex"/>
    <property type="evidence" value="ECO:0007669"/>
    <property type="project" value="UniProtKB-UniRule"/>
</dbReference>
<dbReference type="GO" id="GO:0043138">
    <property type="term" value="F:3'-5' DNA helicase activity"/>
    <property type="evidence" value="ECO:0000318"/>
    <property type="project" value="GO_Central"/>
</dbReference>
<dbReference type="GO" id="GO:0005524">
    <property type="term" value="F:ATP binding"/>
    <property type="evidence" value="ECO:0007669"/>
    <property type="project" value="UniProtKB-UniRule"/>
</dbReference>
<dbReference type="GO" id="GO:0016887">
    <property type="term" value="F:ATP hydrolysis activity"/>
    <property type="evidence" value="ECO:0007669"/>
    <property type="project" value="RHEA"/>
</dbReference>
<dbReference type="GO" id="GO:0003677">
    <property type="term" value="F:DNA binding"/>
    <property type="evidence" value="ECO:0007669"/>
    <property type="project" value="UniProtKB-UniRule"/>
</dbReference>
<dbReference type="GO" id="GO:0008270">
    <property type="term" value="F:zinc ion binding"/>
    <property type="evidence" value="ECO:0007669"/>
    <property type="project" value="UniProtKB-UniRule"/>
</dbReference>
<dbReference type="GO" id="GO:0006310">
    <property type="term" value="P:DNA recombination"/>
    <property type="evidence" value="ECO:0000318"/>
    <property type="project" value="GO_Central"/>
</dbReference>
<dbReference type="GO" id="GO:0006260">
    <property type="term" value="P:DNA replication"/>
    <property type="evidence" value="ECO:0000318"/>
    <property type="project" value="GO_Central"/>
</dbReference>
<dbReference type="GO" id="GO:0006270">
    <property type="term" value="P:DNA replication initiation"/>
    <property type="evidence" value="ECO:0000318"/>
    <property type="project" value="GO_Central"/>
</dbReference>
<dbReference type="GO" id="GO:0006269">
    <property type="term" value="P:DNA replication, synthesis of primer"/>
    <property type="evidence" value="ECO:0007669"/>
    <property type="project" value="UniProtKB-KW"/>
</dbReference>
<dbReference type="GO" id="GO:0006302">
    <property type="term" value="P:double-strand break repair"/>
    <property type="evidence" value="ECO:0000318"/>
    <property type="project" value="GO_Central"/>
</dbReference>
<dbReference type="CDD" id="cd17929">
    <property type="entry name" value="DEXHc_priA"/>
    <property type="match status" value="1"/>
</dbReference>
<dbReference type="CDD" id="cd18804">
    <property type="entry name" value="SF2_C_priA"/>
    <property type="match status" value="1"/>
</dbReference>
<dbReference type="FunFam" id="3.40.1440.60:FF:000001">
    <property type="entry name" value="Primosomal protein N"/>
    <property type="match status" value="1"/>
</dbReference>
<dbReference type="FunFam" id="3.40.50.300:FF:000489">
    <property type="entry name" value="Primosome assembly protein PriA"/>
    <property type="match status" value="1"/>
</dbReference>
<dbReference type="Gene3D" id="3.40.50.300">
    <property type="entry name" value="P-loop containing nucleotide triphosphate hydrolases"/>
    <property type="match status" value="2"/>
</dbReference>
<dbReference type="Gene3D" id="3.40.1440.60">
    <property type="entry name" value="PriA, 3(prime) DNA-binding domain"/>
    <property type="match status" value="1"/>
</dbReference>
<dbReference type="HAMAP" id="MF_00983">
    <property type="entry name" value="PriA"/>
    <property type="match status" value="1"/>
</dbReference>
<dbReference type="InterPro" id="IPR011545">
    <property type="entry name" value="DEAD/DEAH_box_helicase_dom"/>
</dbReference>
<dbReference type="InterPro" id="IPR014001">
    <property type="entry name" value="Helicase_ATP-bd"/>
</dbReference>
<dbReference type="InterPro" id="IPR001650">
    <property type="entry name" value="Helicase_C-like"/>
</dbReference>
<dbReference type="InterPro" id="IPR027417">
    <property type="entry name" value="P-loop_NTPase"/>
</dbReference>
<dbReference type="InterPro" id="IPR005259">
    <property type="entry name" value="PriA"/>
</dbReference>
<dbReference type="InterPro" id="IPR041222">
    <property type="entry name" value="PriA_3primeBD"/>
</dbReference>
<dbReference type="InterPro" id="IPR042115">
    <property type="entry name" value="PriA_3primeBD_sf"/>
</dbReference>
<dbReference type="InterPro" id="IPR041236">
    <property type="entry name" value="PriA_C"/>
</dbReference>
<dbReference type="InterPro" id="IPR040498">
    <property type="entry name" value="PriA_CRR"/>
</dbReference>
<dbReference type="InterPro" id="IPR050880">
    <property type="entry name" value="PriA_helicase"/>
</dbReference>
<dbReference type="NCBIfam" id="TIGR00595">
    <property type="entry name" value="priA"/>
    <property type="match status" value="1"/>
</dbReference>
<dbReference type="NCBIfam" id="NF004066">
    <property type="entry name" value="PRK05580.1-3"/>
    <property type="match status" value="1"/>
</dbReference>
<dbReference type="PANTHER" id="PTHR30580">
    <property type="entry name" value="PRIMOSOMAL PROTEIN N"/>
    <property type="match status" value="1"/>
</dbReference>
<dbReference type="PANTHER" id="PTHR30580:SF0">
    <property type="entry name" value="PRIMOSOMAL PROTEIN N"/>
    <property type="match status" value="1"/>
</dbReference>
<dbReference type="Pfam" id="PF00270">
    <property type="entry name" value="DEAD"/>
    <property type="match status" value="1"/>
</dbReference>
<dbReference type="Pfam" id="PF00271">
    <property type="entry name" value="Helicase_C"/>
    <property type="match status" value="1"/>
</dbReference>
<dbReference type="Pfam" id="PF17764">
    <property type="entry name" value="PriA_3primeBD"/>
    <property type="match status" value="1"/>
</dbReference>
<dbReference type="Pfam" id="PF18074">
    <property type="entry name" value="PriA_C"/>
    <property type="match status" value="1"/>
</dbReference>
<dbReference type="Pfam" id="PF18319">
    <property type="entry name" value="Zn_ribbon_PriA"/>
    <property type="match status" value="1"/>
</dbReference>
<dbReference type="SMART" id="SM00487">
    <property type="entry name" value="DEXDc"/>
    <property type="match status" value="1"/>
</dbReference>
<dbReference type="SMART" id="SM00490">
    <property type="entry name" value="HELICc"/>
    <property type="match status" value="1"/>
</dbReference>
<dbReference type="SUPFAM" id="SSF52540">
    <property type="entry name" value="P-loop containing nucleoside triphosphate hydrolases"/>
    <property type="match status" value="2"/>
</dbReference>
<dbReference type="PROSITE" id="PS51192">
    <property type="entry name" value="HELICASE_ATP_BIND_1"/>
    <property type="match status" value="1"/>
</dbReference>
<dbReference type="PROSITE" id="PS51194">
    <property type="entry name" value="HELICASE_CTER"/>
    <property type="match status" value="1"/>
</dbReference>
<organism>
    <name type="scientific">Bacillus subtilis (strain 168)</name>
    <dbReference type="NCBI Taxonomy" id="224308"/>
    <lineage>
        <taxon>Bacteria</taxon>
        <taxon>Bacillati</taxon>
        <taxon>Bacillota</taxon>
        <taxon>Bacilli</taxon>
        <taxon>Bacillales</taxon>
        <taxon>Bacillaceae</taxon>
        <taxon>Bacillus</taxon>
    </lineage>
</organism>
<accession>P94461</accession>
<accession>O34941</accession>
<protein>
    <recommendedName>
        <fullName evidence="1">Replication restart protein PriA</fullName>
    </recommendedName>
    <alternativeName>
        <fullName evidence="1 10">ATP-dependent DNA helicase PriA</fullName>
        <ecNumber evidence="1 14 16 17">5.6.2.4</ecNumber>
    </alternativeName>
    <alternativeName>
        <fullName evidence="1">DNA 3'-5' helicase PriA</fullName>
    </alternativeName>
</protein>
<comment type="function">
    <text evidence="2 3 4 5 7 8 15">Initiates the restart of stalled replication forks, which reloads the replicative helicase on sites other than the origin of replication (PubMed:11917020, PubMed:17853894). Recognizes and binds to abandoned replication forks and remodels them to uncover a helicase loading site. Promotes assembly of the primosome at these replication forks. Serves as the initiating protein for assembly of the replication restart primosome; binding of PriA to an arrested DNA replication fork with unreplicated lagging strand triggers assembly (PubMed:11585815). Sequentially DnaD (possibly as a dimer) and DnaB homotetramers bind (PubMed:11585815). Assembly probably continues by loading of the DnaC replicative helicase aided by helicase loader DnaI (Probable) (PubMed:11585815, PubMed:11679082). A single-strand (ss)DNA-dependent ATPase with helicase activity (PubMed:10572298, PubMed:11917020). Recognizes and binds the arrested nascent DNA chain at stalled replication forks (PubMed:10572298, PubMed:11585815). Binds forked DNA substrates and makes a larger complex with RarA; RarA has no effect on the helicase function (PubMed:29947798). Binds ssDNA, D-loops and replication fork-like substrates but not double-stranded (ds)DNA; the preferred DNA substrate mimics an arrested DNA replication fork with an unreplicated lagging strand (PubMed:11585815, PubMed:11917020). Recognizes nicked dsDNA (PubMed:11585815). A supershift on ssDNA occurs in the presence of single-stranded binding protein (SSB) (PubMed:11917020). Cannot substitute for E.coli PriA (PubMed:11917020).</text>
</comment>
<comment type="function">
    <text evidence="4">Required for replication of plasmids that have a rolling circle mechanism, which produces circular single-stranded (ss)DNA intermediates corresponding to the lagging strand template, which are then converted into double-stranded (ds)DNA; priA is required to activate the conversion of ssDNA into dsDNA (PubMed:11679082).</text>
</comment>
<comment type="catalytic activity">
    <reaction evidence="1 14 16 17 18">
        <text>Couples ATP hydrolysis with the unwinding of duplex DNA by translocating in the 3'-5' direction.</text>
        <dbReference type="EC" id="5.6.2.4"/>
    </reaction>
</comment>
<comment type="catalytic activity">
    <reaction evidence="1 2 5 7">
        <text>ATP + H2O = ADP + phosphate + H(+)</text>
        <dbReference type="Rhea" id="RHEA:13065"/>
        <dbReference type="ChEBI" id="CHEBI:15377"/>
        <dbReference type="ChEBI" id="CHEBI:15378"/>
        <dbReference type="ChEBI" id="CHEBI:30616"/>
        <dbReference type="ChEBI" id="CHEBI:43474"/>
        <dbReference type="ChEBI" id="CHEBI:456216"/>
        <dbReference type="EC" id="5.6.2.4"/>
    </reaction>
</comment>
<comment type="cofactor">
    <cofactor evidence="1">
        <name>Zn(2+)</name>
        <dbReference type="ChEBI" id="CHEBI:29105"/>
    </cofactor>
    <text evidence="1">Binds 2 zinc ions per subunit.</text>
</comment>
<comment type="subunit">
    <text evidence="1 3 4 6 7 18">Monomer (PubMed:11585815). Component of the replication restart primosome which assembles in this order; PriA, DnaD then DnaB. The preferred DNA substrate mimics an arrested DNA replication fork with unreplicated lagging strand (PubMed:11585815, PubMed:11679082). Interacts with DnaD but not DnaB (PubMed:15686560). Interacts with SSB (sbbA) via the latter's 35 residue C-terminal tail which tethers PriA to ssDNA (PubMed:17853894). Colocalizes with DNA pol III subunit gamma/tau (dnaX) (PubMed:17853894). May interact with RarA (PubMed:29947798).</text>
</comment>
<comment type="subcellular location">
    <subcellularLocation>
        <location evidence="7">Cytoplasm</location>
        <location evidence="7">Nucleoid</location>
    </subcellularLocation>
    <text evidence="7">Localizes in tight foci to the chromosome replication center at mid-cell during most to all of the cell cycle (PubMed:17853894).</text>
</comment>
<comment type="domain">
    <text evidence="9">Contains an N-terminal DNA-binding domain and a C-terminal helicase domain with a number of subdomains, all of which contact ss- or dsDNA. Deletions of the 3'BD or permuted winged helix domain (WH) domains are hypersensitive to methyl methanesulfonate (MMS) and ciprofloxacin (CIP) (PubMed:35007156). The WH domain plus its N-terminal linker stably bind single-stranded (ss)DNA; the WH domain alone does not (PubMed:35007156). Deletion of most of the linker (residues 125-166) leads to hypersensitivity to MMS, CIP or mitomycin C (PubMed:35007156).</text>
</comment>
<comment type="disruption phenotype">
    <text evidence="4 5">Filamentation, slow growth and poor viability in minimal medium, sensitivity to rich medium and to UV irradiation, does not replicate some plasmids (PubMed:11679082, PubMed:11917020).</text>
</comment>
<comment type="miscellaneous">
    <text evidence="5">Between 50 and 100 molecules are found per cell.</text>
</comment>
<comment type="similarity">
    <text evidence="1">Belongs to the helicase family. PriA subfamily.</text>
</comment>
<feature type="chain" id="PRO_0000102116" description="Replication restart protein PriA">
    <location>
        <begin position="1"/>
        <end position="805"/>
    </location>
</feature>
<feature type="domain" description="Helicase ATP-binding" evidence="1">
    <location>
        <begin position="282"/>
        <end position="448"/>
    </location>
</feature>
<feature type="domain" description="Helicase C-terminal" evidence="1">
    <location>
        <begin position="545"/>
        <end position="699"/>
    </location>
</feature>
<feature type="region of interest" description="3'BD" evidence="19">
    <location>
        <begin position="1"/>
        <end position="110"/>
    </location>
</feature>
<feature type="region of interest" description="Linker" evidence="19">
    <location>
        <begin position="111"/>
        <end position="166"/>
    </location>
</feature>
<feature type="region of interest" description="WH" evidence="19">
    <location>
        <begin position="167"/>
        <end position="253"/>
    </location>
</feature>
<feature type="short sequence motif" description="DEAH box" evidence="1">
    <location>
        <begin position="391"/>
        <end position="394"/>
    </location>
</feature>
<feature type="binding site" evidence="1">
    <location>
        <begin position="295"/>
        <end position="302"/>
    </location>
    <ligand>
        <name>ATP</name>
        <dbReference type="ChEBI" id="CHEBI:30616"/>
    </ligand>
</feature>
<feature type="binding site" evidence="1">
    <location>
        <position position="510"/>
    </location>
    <ligand>
        <name>Zn(2+)</name>
        <dbReference type="ChEBI" id="CHEBI:29105"/>
        <label>1</label>
    </ligand>
</feature>
<feature type="binding site" evidence="1">
    <location>
        <position position="513"/>
    </location>
    <ligand>
        <name>Zn(2+)</name>
        <dbReference type="ChEBI" id="CHEBI:29105"/>
        <label>1</label>
    </ligand>
</feature>
<feature type="binding site" evidence="1">
    <location>
        <position position="519"/>
    </location>
    <ligand>
        <name>Zn(2+)</name>
        <dbReference type="ChEBI" id="CHEBI:29105"/>
        <label>2</label>
    </ligand>
</feature>
<feature type="binding site" evidence="1">
    <location>
        <position position="522"/>
    </location>
    <ligand>
        <name>Zn(2+)</name>
        <dbReference type="ChEBI" id="CHEBI:29105"/>
        <label>2</label>
    </ligand>
</feature>
<feature type="binding site" evidence="1">
    <location>
        <position position="537"/>
    </location>
    <ligand>
        <name>Zn(2+)</name>
        <dbReference type="ChEBI" id="CHEBI:29105"/>
        <label>2</label>
    </ligand>
</feature>
<feature type="binding site" evidence="1">
    <location>
        <position position="540"/>
    </location>
    <ligand>
        <name>Zn(2+)</name>
        <dbReference type="ChEBI" id="CHEBI:29105"/>
        <label>2</label>
    </ligand>
</feature>
<feature type="binding site" evidence="1">
    <location>
        <position position="550"/>
    </location>
    <ligand>
        <name>Zn(2+)</name>
        <dbReference type="ChEBI" id="CHEBI:29105"/>
        <label>1</label>
    </ligand>
</feature>
<feature type="binding site" evidence="1">
    <location>
        <position position="553"/>
    </location>
    <ligand>
        <name>Zn(2+)</name>
        <dbReference type="ChEBI" id="CHEBI:29105"/>
        <label>1</label>
    </ligand>
</feature>
<feature type="mutagenesis site" description="Hypersensitive to methyl methanesulfonate (MMS); when associated with A-65." evidence="9">
    <original>F</original>
    <variation>A</variation>
    <location>
        <position position="19"/>
    </location>
</feature>
<feature type="mutagenesis site" description="Hypersensitive to MMS; when associated with A-19." evidence="9">
    <original>K</original>
    <variation>A</variation>
    <location>
        <position position="65"/>
    </location>
</feature>
<feature type="mutagenesis site" description="Linker plus WH domain bind ssDNA poorly, no visible effect in vivo." evidence="9">
    <original>YEKEL</original>
    <variation>ASAEA</variation>
    <location>
        <begin position="112"/>
        <end position="116"/>
    </location>
</feature>
<feature type="mutagenesis site" description="Hypersensitive to MMS and ciprofloxacin, no change in ssDNA-binding." evidence="9">
    <original>EVYR</original>
    <variation>AVAA</variation>
    <location>
        <begin position="249"/>
        <end position="252"/>
    </location>
</feature>
<feature type="mutagenesis site" description="Loss of ATPase and helicase activity, still localizes to the chromosome replication center." evidence="7">
    <original>K</original>
    <variation>A</variation>
    <location>
        <position position="301"/>
    </location>
</feature>
<feature type="sequence conflict" description="In Ref. 3; CAA71348." evidence="13" ref="3">
    <original>A</original>
    <variation>V</variation>
    <location>
        <position position="232"/>
    </location>
</feature>
<feature type="sequence conflict" description="In Ref. 3; CAA71348." evidence="13" ref="3">
    <original>FYQHEMAH</original>
    <variation>VLSSMKWRT</variation>
    <location>
        <begin position="691"/>
        <end position="698"/>
    </location>
</feature>
<sequence length="805" mass="91353">MNFAEVIVDVSTKNIDRPFDYKIPDHLKGMIKTGMRVIVPFGPRKIQGFVTAVKEASDLSGKSVKEVEDLLDLTPVLTEELMILSSWLSDKTLSFKITALQAMLPAALKAKYEKELKIAHGADLPPQVERLFSETKTLLYSDIPDHETLKLIQRHVQKGDIDVTYKVAQKTNKKMVRHIQANASKEELAKQAEGLSRQAAKQQAILHFLISEPEGVKIPAAELCKKTDTSSATIKTLIQKGLLKESYEEVYRDPYQDKMFKKTEPLPLTDEQRAAFEPIRETLDSDEHKVFLLHGVTGSGKTEIYLQSIEKVLAKGKEAIVLVPEISLTPQMVNRFKGRFGSQVAVMHSGLSTGEKYDEWRKIHRKEVRLVVGARSAIFAPFENLGMIIIDEEHESSYKQEEMPRYHAKEVAIKRAEHHSCPVVLGSATPTLESYARAQKGVYELLSLKHRVNHRVMPEVSLVDMREELRNGNRSMFSVELMEKLEETIAKGEQAVLFLNKRGYSSFVMCRDCGYVPQCPHCDISMTYHRYGQRLKCHYCGHEEPVPHTCPECASEHIRFFGTGTQRVEEELTKVLPSARVIRMDVDTTSRKGAHEKLLSAFGEGKADILLGTQMIAKGLDFPNVTLVGVLSADTTLHIPDFRSAEKTFQLLTQVSGRAGRHEKPGHVIIQTYTPSHYSIQLTKTHDYETFYQHEMAHRREQSYPPYYYLALVTVSHEEVAKAAVTAEKIAHFLKANCGADTKILGPSASPIARIKDRYRYQCVIKYKQETQLSALLKKILEHYKREIEQKHVMISIDMNPYMMM</sequence>
<keyword id="KW-0067">ATP-binding</keyword>
<keyword id="KW-0963">Cytoplasm</keyword>
<keyword id="KW-0235">DNA replication</keyword>
<keyword id="KW-0238">DNA-binding</keyword>
<keyword id="KW-0347">Helicase</keyword>
<keyword id="KW-0378">Hydrolase</keyword>
<keyword id="KW-0413">Isomerase</keyword>
<keyword id="KW-0479">Metal-binding</keyword>
<keyword id="KW-0547">Nucleotide-binding</keyword>
<keyword id="KW-0639">Primosome</keyword>
<keyword id="KW-1185">Reference proteome</keyword>
<keyword id="KW-0862">Zinc</keyword>
<gene>
    <name evidence="1 11" type="primary">priA</name>
    <name evidence="12" type="synonym">yloJ</name>
    <name type="ordered locus">BSU15710</name>
</gene>
<reference key="1">
    <citation type="journal article" date="1998" name="Microbiology">
        <title>A 28 kbp segment from the spoVM region of the Bacillus subtilis 168 genome.</title>
        <authorList>
            <person name="Foulger D."/>
            <person name="Errington J."/>
        </authorList>
    </citation>
    <scope>NUCLEOTIDE SEQUENCE [GENOMIC DNA]</scope>
    <source>
        <strain>168</strain>
    </source>
</reference>
<reference key="2">
    <citation type="journal article" date="1997" name="Nature">
        <title>The complete genome sequence of the Gram-positive bacterium Bacillus subtilis.</title>
        <authorList>
            <person name="Kunst F."/>
            <person name="Ogasawara N."/>
            <person name="Moszer I."/>
            <person name="Albertini A.M."/>
            <person name="Alloni G."/>
            <person name="Azevedo V."/>
            <person name="Bertero M.G."/>
            <person name="Bessieres P."/>
            <person name="Bolotin A."/>
            <person name="Borchert S."/>
            <person name="Borriss R."/>
            <person name="Boursier L."/>
            <person name="Brans A."/>
            <person name="Braun M."/>
            <person name="Brignell S.C."/>
            <person name="Bron S."/>
            <person name="Brouillet S."/>
            <person name="Bruschi C.V."/>
            <person name="Caldwell B."/>
            <person name="Capuano V."/>
            <person name="Carter N.M."/>
            <person name="Choi S.-K."/>
            <person name="Codani J.-J."/>
            <person name="Connerton I.F."/>
            <person name="Cummings N.J."/>
            <person name="Daniel R.A."/>
            <person name="Denizot F."/>
            <person name="Devine K.M."/>
            <person name="Duesterhoeft A."/>
            <person name="Ehrlich S.D."/>
            <person name="Emmerson P.T."/>
            <person name="Entian K.-D."/>
            <person name="Errington J."/>
            <person name="Fabret C."/>
            <person name="Ferrari E."/>
            <person name="Foulger D."/>
            <person name="Fritz C."/>
            <person name="Fujita M."/>
            <person name="Fujita Y."/>
            <person name="Fuma S."/>
            <person name="Galizzi A."/>
            <person name="Galleron N."/>
            <person name="Ghim S.-Y."/>
            <person name="Glaser P."/>
            <person name="Goffeau A."/>
            <person name="Golightly E.J."/>
            <person name="Grandi G."/>
            <person name="Guiseppi G."/>
            <person name="Guy B.J."/>
            <person name="Haga K."/>
            <person name="Haiech J."/>
            <person name="Harwood C.R."/>
            <person name="Henaut A."/>
            <person name="Hilbert H."/>
            <person name="Holsappel S."/>
            <person name="Hosono S."/>
            <person name="Hullo M.-F."/>
            <person name="Itaya M."/>
            <person name="Jones L.-M."/>
            <person name="Joris B."/>
            <person name="Karamata D."/>
            <person name="Kasahara Y."/>
            <person name="Klaerr-Blanchard M."/>
            <person name="Klein C."/>
            <person name="Kobayashi Y."/>
            <person name="Koetter P."/>
            <person name="Koningstein G."/>
            <person name="Krogh S."/>
            <person name="Kumano M."/>
            <person name="Kurita K."/>
            <person name="Lapidus A."/>
            <person name="Lardinois S."/>
            <person name="Lauber J."/>
            <person name="Lazarevic V."/>
            <person name="Lee S.-M."/>
            <person name="Levine A."/>
            <person name="Liu H."/>
            <person name="Masuda S."/>
            <person name="Mauel C."/>
            <person name="Medigue C."/>
            <person name="Medina N."/>
            <person name="Mellado R.P."/>
            <person name="Mizuno M."/>
            <person name="Moestl D."/>
            <person name="Nakai S."/>
            <person name="Noback M."/>
            <person name="Noone D."/>
            <person name="O'Reilly M."/>
            <person name="Ogawa K."/>
            <person name="Ogiwara A."/>
            <person name="Oudega B."/>
            <person name="Park S.-H."/>
            <person name="Parro V."/>
            <person name="Pohl T.M."/>
            <person name="Portetelle D."/>
            <person name="Porwollik S."/>
            <person name="Prescott A.M."/>
            <person name="Presecan E."/>
            <person name="Pujic P."/>
            <person name="Purnelle B."/>
            <person name="Rapoport G."/>
            <person name="Rey M."/>
            <person name="Reynolds S."/>
            <person name="Rieger M."/>
            <person name="Rivolta C."/>
            <person name="Rocha E."/>
            <person name="Roche B."/>
            <person name="Rose M."/>
            <person name="Sadaie Y."/>
            <person name="Sato T."/>
            <person name="Scanlan E."/>
            <person name="Schleich S."/>
            <person name="Schroeter R."/>
            <person name="Scoffone F."/>
            <person name="Sekiguchi J."/>
            <person name="Sekowska A."/>
            <person name="Seror S.J."/>
            <person name="Serror P."/>
            <person name="Shin B.-S."/>
            <person name="Soldo B."/>
            <person name="Sorokin A."/>
            <person name="Tacconi E."/>
            <person name="Takagi T."/>
            <person name="Takahashi H."/>
            <person name="Takemaru K."/>
            <person name="Takeuchi M."/>
            <person name="Tamakoshi A."/>
            <person name="Tanaka T."/>
            <person name="Terpstra P."/>
            <person name="Tognoni A."/>
            <person name="Tosato V."/>
            <person name="Uchiyama S."/>
            <person name="Vandenbol M."/>
            <person name="Vannier F."/>
            <person name="Vassarotti A."/>
            <person name="Viari A."/>
            <person name="Wambutt R."/>
            <person name="Wedler E."/>
            <person name="Wedler H."/>
            <person name="Weitzenegger T."/>
            <person name="Winters P."/>
            <person name="Wipat A."/>
            <person name="Yamamoto H."/>
            <person name="Yamane K."/>
            <person name="Yasumoto K."/>
            <person name="Yata K."/>
            <person name="Yoshida K."/>
            <person name="Yoshikawa H.-F."/>
            <person name="Zumstein E."/>
            <person name="Yoshikawa H."/>
            <person name="Danchin A."/>
        </authorList>
    </citation>
    <scope>NUCLEOTIDE SEQUENCE [LARGE SCALE GENOMIC DNA]</scope>
    <source>
        <strain>168</strain>
    </source>
</reference>
<reference key="3">
    <citation type="journal article" date="1997" name="J. Mol. Biol.">
        <title>A survey of polypeptide deformylase function throughout the eubacterial lineage.</title>
        <authorList>
            <person name="Mazel D."/>
            <person name="Coic E."/>
            <person name="Blanchard S."/>
            <person name="Saurin W."/>
            <person name="Marliere P."/>
        </authorList>
    </citation>
    <scope>NUCLEOTIDE SEQUENCE [GENOMIC DNA] OF 230-805</scope>
    <source>
        <strain>168</strain>
    </source>
</reference>
<reference key="4">
    <citation type="journal article" date="1999" name="Biochimie">
        <title>Escherichia coli and Bacillus subtilis PriA proteins essential for recombination-dependent DNA replication: involvement of ATPase/helicase activity of PriA for inducible stable DNA replication.</title>
        <authorList>
            <person name="Masai H."/>
            <person name="Deneke J."/>
            <person name="Furui Y."/>
            <person name="Tanaka T."/>
            <person name="Arai K.I."/>
        </authorList>
    </citation>
    <scope>FUNCTION AS AN ATPASE</scope>
    <scope>FUNCTION AS A HELICASE</scope>
    <scope>DNA-BINDING</scope>
</reference>
<reference key="5">
    <citation type="journal article" date="2001" name="J. Biol. Chem.">
        <title>Early steps of Bacillus subtilis primosome assembly.</title>
        <authorList>
            <person name="Marsin S."/>
            <person name="McGovern S."/>
            <person name="Ehrlich S.D."/>
            <person name="Bruand C."/>
            <person name="Polard P."/>
        </authorList>
    </citation>
    <scope>FUNCTION IN PRIMOSOME ASSEMBLY</scope>
    <scope>SUBUNIT</scope>
    <scope>DNA-BINDING</scope>
    <source>
        <strain>168</strain>
    </source>
</reference>
<reference key="6">
    <citation type="journal article" date="2001" name="Mol. Microbiol.">
        <title>DnaB, DnaD and DnaI proteins are components of the Bacillus subtilis replication restart primosome.</title>
        <authorList>
            <person name="Bruand C."/>
            <person name="Farache M."/>
            <person name="McGovern S."/>
            <person name="Ehrlich S.D."/>
            <person name="Polard P."/>
        </authorList>
    </citation>
    <scope>FUNCTION</scope>
    <scope>SUBUNIT</scope>
    <scope>DISRUPTION PHENOTYPE</scope>
</reference>
<reference key="7">
    <citation type="journal article" date="2002" name="Nucleic Acids Res.">
        <title>Restart of DNA replication in Gram-positive bacteria: functional characterisation of the Bacillus subtilis PriA initiator.</title>
        <authorList>
            <person name="Polard P."/>
            <person name="Marsin S."/>
            <person name="McGovern S."/>
            <person name="Velten M."/>
            <person name="Wigley D.B."/>
            <person name="Ehrlich S.D."/>
            <person name="Bruand C."/>
        </authorList>
    </citation>
    <scope>FUNCTION AS AN ATPASE</scope>
    <scope>FUNCTION AS A HELICASE</scope>
    <scope>DNA-BINDING</scope>
    <scope>PROTEIN ABUNDANCE</scope>
    <source>
        <strain>168</strain>
    </source>
</reference>
<reference key="8">
    <citation type="journal article" date="2005" name="Mol. Microbiol.">
        <title>Functional interplay between the Bacillus subtilis DnaD and DnaB proteins essential for initiation and re-initiation of DNA replication.</title>
        <authorList>
            <person name="Bruand C."/>
            <person name="Velten M."/>
            <person name="McGovern S."/>
            <person name="Marsin S."/>
            <person name="Serena C."/>
            <person name="Ehrlich S.D."/>
            <person name="Polard P."/>
        </authorList>
    </citation>
    <scope>SUBUNIT</scope>
    <scope>INTERACTION WITH DNAD</scope>
    <source>
        <strain>168</strain>
    </source>
</reference>
<reference key="9">
    <citation type="journal article" date="2007" name="EMBO J.">
        <title>Anticipating chromosomal replication fork arrest: SSB targets repair DNA helicases to active forks.</title>
        <authorList>
            <person name="Lecointe F."/>
            <person name="Serena C."/>
            <person name="Velten M."/>
            <person name="Costes A."/>
            <person name="McGovern S."/>
            <person name="Meile J.C."/>
            <person name="Errington J."/>
            <person name="Ehrlich S.D."/>
            <person name="Noirot P."/>
            <person name="Polard P."/>
        </authorList>
    </citation>
    <scope>FUNCTION</scope>
    <scope>FUNCTION AS A HELICASE</scope>
    <scope>CATALYTIC ACTIVITY</scope>
    <scope>INTERACTION WITH SSBA</scope>
    <scope>SUBCELLULAR LOCATION</scope>
    <scope>DNA-BINDING</scope>
    <scope>MUTAGENESIS OF LYS-301</scope>
    <source>
        <strain>168</strain>
    </source>
</reference>
<reference key="10">
    <citation type="journal article" date="2018" name="Nucleic Acids Res.">
        <title>Bacillus subtilis RarA modulates replication restart.</title>
        <authorList>
            <person name="Carrasco B."/>
            <person name="Seco E.M."/>
            <person name="Lopez-Sanz M."/>
            <person name="Alonso J.C."/>
            <person name="Ayora S."/>
        </authorList>
    </citation>
    <scope>FUNCTION AS A HELICASE</scope>
    <scope>CATALYTIC ACTIVITY</scope>
    <scope>SUBUNIT</scope>
    <scope>DNA-BINDING</scope>
</reference>
<reference key="11">
    <citation type="journal article" date="2022" name="J. Bacteriol.">
        <title>The Bacillus subtilis PriA Winged Helix Domain Is Critical for Surviving DNA Damage.</title>
        <authorList>
            <person name="Matthews L.A."/>
            <person name="Simmons L.A."/>
        </authorList>
    </citation>
    <scope>DOMAIN</scope>
    <scope>MUTAGENESIS OF PHE-19; LYS-65; 112-TYR--LEU-116 AND 249-GLU--ARG-252</scope>
    <source>
        <strain>168 / PY79</strain>
    </source>
</reference>